<organism>
    <name type="scientific">Salmonella schwarzengrund (strain CVM19633)</name>
    <dbReference type="NCBI Taxonomy" id="439843"/>
    <lineage>
        <taxon>Bacteria</taxon>
        <taxon>Pseudomonadati</taxon>
        <taxon>Pseudomonadota</taxon>
        <taxon>Gammaproteobacteria</taxon>
        <taxon>Enterobacterales</taxon>
        <taxon>Enterobacteriaceae</taxon>
        <taxon>Salmonella</taxon>
    </lineage>
</organism>
<comment type="function">
    <text evidence="1">Catalyzes the decarboxylation of four acetate groups of uroporphyrinogen-III to yield coproporphyrinogen-III.</text>
</comment>
<comment type="catalytic activity">
    <reaction evidence="1">
        <text>uroporphyrinogen III + 4 H(+) = coproporphyrinogen III + 4 CO2</text>
        <dbReference type="Rhea" id="RHEA:19865"/>
        <dbReference type="ChEBI" id="CHEBI:15378"/>
        <dbReference type="ChEBI" id="CHEBI:16526"/>
        <dbReference type="ChEBI" id="CHEBI:57308"/>
        <dbReference type="ChEBI" id="CHEBI:57309"/>
        <dbReference type="EC" id="4.1.1.37"/>
    </reaction>
</comment>
<comment type="pathway">
    <text evidence="1">Porphyrin-containing compound metabolism; protoporphyrin-IX biosynthesis; coproporphyrinogen-III from 5-aminolevulinate: step 4/4.</text>
</comment>
<comment type="subunit">
    <text evidence="1">Homodimer.</text>
</comment>
<comment type="subcellular location">
    <subcellularLocation>
        <location evidence="1">Cytoplasm</location>
    </subcellularLocation>
</comment>
<comment type="similarity">
    <text evidence="1">Belongs to the uroporphyrinogen decarboxylase family.</text>
</comment>
<name>DCUP_SALSV</name>
<accession>B4TQK7</accession>
<proteinExistence type="inferred from homology"/>
<sequence length="354" mass="39132">MTELKNDRYLRALLRQPVDVTPVWMMRQAGRYLPEYKATRAQAGDFMSLCKNAELACEVTLQPLRRYPLDAAILFSDILTIPDAMGLGLYFEAGEGPRFTAPVTCKADVDKLPIPAPEDELGYVMNAVRTIRRELKGEVPLIGFSGSPWTLATYMVEGGSSKAFTVIKKMMYADPQALHLLLDKLAKSVTLYLNAQIKAGAQSVMIFDTWGGVLTGRDYQQFSLYYMHKIVDGLLRENDGRRVPVTLFTKGGGQWLEAMAETGCDALGLDWTTDIADARRRVGHKVALQGNMDPSMLYAPPARIEDEVATILAGFGQGEGHVFNLGHGIHQDVPPEHAGAFVEAVHRLSAQYHN</sequence>
<dbReference type="EC" id="4.1.1.37" evidence="1"/>
<dbReference type="EMBL" id="CP001127">
    <property type="protein sequence ID" value="ACF92337.1"/>
    <property type="molecule type" value="Genomic_DNA"/>
</dbReference>
<dbReference type="RefSeq" id="WP_000137617.1">
    <property type="nucleotide sequence ID" value="NC_011094.1"/>
</dbReference>
<dbReference type="SMR" id="B4TQK7"/>
<dbReference type="KEGG" id="sew:SeSA_A4378"/>
<dbReference type="HOGENOM" id="CLU_040933_0_0_6"/>
<dbReference type="UniPathway" id="UPA00251">
    <property type="reaction ID" value="UER00321"/>
</dbReference>
<dbReference type="Proteomes" id="UP000001865">
    <property type="component" value="Chromosome"/>
</dbReference>
<dbReference type="GO" id="GO:0005829">
    <property type="term" value="C:cytosol"/>
    <property type="evidence" value="ECO:0007669"/>
    <property type="project" value="TreeGrafter"/>
</dbReference>
<dbReference type="GO" id="GO:0004853">
    <property type="term" value="F:uroporphyrinogen decarboxylase activity"/>
    <property type="evidence" value="ECO:0007669"/>
    <property type="project" value="UniProtKB-UniRule"/>
</dbReference>
<dbReference type="GO" id="GO:0019353">
    <property type="term" value="P:protoporphyrinogen IX biosynthetic process from glutamate"/>
    <property type="evidence" value="ECO:0007669"/>
    <property type="project" value="TreeGrafter"/>
</dbReference>
<dbReference type="CDD" id="cd00717">
    <property type="entry name" value="URO-D"/>
    <property type="match status" value="1"/>
</dbReference>
<dbReference type="FunFam" id="3.20.20.210:FF:000001">
    <property type="entry name" value="Uroporphyrinogen decarboxylase"/>
    <property type="match status" value="1"/>
</dbReference>
<dbReference type="Gene3D" id="3.20.20.210">
    <property type="match status" value="1"/>
</dbReference>
<dbReference type="HAMAP" id="MF_00218">
    <property type="entry name" value="URO_D"/>
    <property type="match status" value="1"/>
</dbReference>
<dbReference type="InterPro" id="IPR038071">
    <property type="entry name" value="UROD/MetE-like_sf"/>
</dbReference>
<dbReference type="InterPro" id="IPR006361">
    <property type="entry name" value="Uroporphyrinogen_deCO2ase_HemE"/>
</dbReference>
<dbReference type="InterPro" id="IPR000257">
    <property type="entry name" value="Uroporphyrinogen_deCOase"/>
</dbReference>
<dbReference type="NCBIfam" id="TIGR01464">
    <property type="entry name" value="hemE"/>
    <property type="match status" value="1"/>
</dbReference>
<dbReference type="PANTHER" id="PTHR21091">
    <property type="entry name" value="METHYLTETRAHYDROFOLATE:HOMOCYSTEINE METHYLTRANSFERASE RELATED"/>
    <property type="match status" value="1"/>
</dbReference>
<dbReference type="PANTHER" id="PTHR21091:SF169">
    <property type="entry name" value="UROPORPHYRINOGEN DECARBOXYLASE"/>
    <property type="match status" value="1"/>
</dbReference>
<dbReference type="Pfam" id="PF01208">
    <property type="entry name" value="URO-D"/>
    <property type="match status" value="1"/>
</dbReference>
<dbReference type="SUPFAM" id="SSF51726">
    <property type="entry name" value="UROD/MetE-like"/>
    <property type="match status" value="1"/>
</dbReference>
<dbReference type="PROSITE" id="PS00906">
    <property type="entry name" value="UROD_1"/>
    <property type="match status" value="1"/>
</dbReference>
<dbReference type="PROSITE" id="PS00907">
    <property type="entry name" value="UROD_2"/>
    <property type="match status" value="1"/>
</dbReference>
<gene>
    <name evidence="1" type="primary">hemE</name>
    <name type="ordered locus">SeSA_A4378</name>
</gene>
<protein>
    <recommendedName>
        <fullName evidence="1">Uroporphyrinogen decarboxylase</fullName>
        <shortName evidence="1">UPD</shortName>
        <shortName evidence="1">URO-D</shortName>
        <ecNumber evidence="1">4.1.1.37</ecNumber>
    </recommendedName>
</protein>
<evidence type="ECO:0000255" key="1">
    <source>
        <dbReference type="HAMAP-Rule" id="MF_00218"/>
    </source>
</evidence>
<reference key="1">
    <citation type="journal article" date="2011" name="J. Bacteriol.">
        <title>Comparative genomics of 28 Salmonella enterica isolates: evidence for CRISPR-mediated adaptive sublineage evolution.</title>
        <authorList>
            <person name="Fricke W.F."/>
            <person name="Mammel M.K."/>
            <person name="McDermott P.F."/>
            <person name="Tartera C."/>
            <person name="White D.G."/>
            <person name="Leclerc J.E."/>
            <person name="Ravel J."/>
            <person name="Cebula T.A."/>
        </authorList>
    </citation>
    <scope>NUCLEOTIDE SEQUENCE [LARGE SCALE GENOMIC DNA]</scope>
    <source>
        <strain>CVM19633</strain>
    </source>
</reference>
<keyword id="KW-0963">Cytoplasm</keyword>
<keyword id="KW-0210">Decarboxylase</keyword>
<keyword id="KW-0456">Lyase</keyword>
<keyword id="KW-0627">Porphyrin biosynthesis</keyword>
<feature type="chain" id="PRO_1000100018" description="Uroporphyrinogen decarboxylase">
    <location>
        <begin position="1"/>
        <end position="354"/>
    </location>
</feature>
<feature type="binding site" evidence="1">
    <location>
        <begin position="27"/>
        <end position="31"/>
    </location>
    <ligand>
        <name>substrate</name>
    </ligand>
</feature>
<feature type="binding site" evidence="1">
    <location>
        <position position="77"/>
    </location>
    <ligand>
        <name>substrate</name>
    </ligand>
</feature>
<feature type="binding site" evidence="1">
    <location>
        <position position="154"/>
    </location>
    <ligand>
        <name>substrate</name>
    </ligand>
</feature>
<feature type="binding site" evidence="1">
    <location>
        <position position="209"/>
    </location>
    <ligand>
        <name>substrate</name>
    </ligand>
</feature>
<feature type="binding site" evidence="1">
    <location>
        <position position="327"/>
    </location>
    <ligand>
        <name>substrate</name>
    </ligand>
</feature>
<feature type="site" description="Transition state stabilizer" evidence="1">
    <location>
        <position position="77"/>
    </location>
</feature>